<reference key="1">
    <citation type="submission" date="2006-01" db="EMBL/GenBank/DDBJ databases">
        <title>A comparison of the first two published chloroplast genomes in Asteraceae: Lactuca and Helianthus.</title>
        <authorList>
            <person name="Timme R.E."/>
            <person name="Kuehl J.V."/>
            <person name="Boore J.L."/>
            <person name="Jansen R.K."/>
        </authorList>
    </citation>
    <scope>NUCLEOTIDE SEQUENCE [LARGE SCALE GENOMIC DNA]</scope>
    <source>
        <strain>cv. HA383</strain>
    </source>
</reference>
<name>PSBB_HELAN</name>
<accession>Q1KXT3</accession>
<comment type="function">
    <text evidence="1">One of the components of the core complex of photosystem II (PSII). It binds chlorophyll and helps catalyze the primary light-induced photochemical processes of PSII. PSII is a light-driven water:plastoquinone oxidoreductase, using light energy to abstract electrons from H(2)O, generating O(2) and a proton gradient subsequently used for ATP formation.</text>
</comment>
<comment type="cofactor">
    <text evidence="1">Binds multiple chlorophylls. PSII binds additional chlorophylls, carotenoids and specific lipids.</text>
</comment>
<comment type="subunit">
    <text evidence="1">PSII is composed of 1 copy each of membrane proteins PsbA, PsbB, PsbC, PsbD, PsbE, PsbF, PsbH, PsbI, PsbJ, PsbK, PsbL, PsbM, PsbT, PsbX, PsbY, PsbZ, Psb30/Ycf12, at least 3 peripheral proteins of the oxygen-evolving complex and a large number of cofactors. It forms dimeric complexes.</text>
</comment>
<comment type="subcellular location">
    <subcellularLocation>
        <location evidence="1">Plastid</location>
        <location evidence="1">Chloroplast thylakoid membrane</location>
        <topology evidence="1">Multi-pass membrane protein</topology>
    </subcellularLocation>
</comment>
<comment type="similarity">
    <text evidence="1">Belongs to the PsbB/PsbC family. PsbB subfamily.</text>
</comment>
<gene>
    <name evidence="1" type="primary">psbB</name>
</gene>
<geneLocation type="chloroplast"/>
<organism>
    <name type="scientific">Helianthus annuus</name>
    <name type="common">Common sunflower</name>
    <dbReference type="NCBI Taxonomy" id="4232"/>
    <lineage>
        <taxon>Eukaryota</taxon>
        <taxon>Viridiplantae</taxon>
        <taxon>Streptophyta</taxon>
        <taxon>Embryophyta</taxon>
        <taxon>Tracheophyta</taxon>
        <taxon>Spermatophyta</taxon>
        <taxon>Magnoliopsida</taxon>
        <taxon>eudicotyledons</taxon>
        <taxon>Gunneridae</taxon>
        <taxon>Pentapetalae</taxon>
        <taxon>asterids</taxon>
        <taxon>campanulids</taxon>
        <taxon>Asterales</taxon>
        <taxon>Asteraceae</taxon>
        <taxon>Asteroideae</taxon>
        <taxon>Heliantheae alliance</taxon>
        <taxon>Heliantheae</taxon>
        <taxon>Helianthus</taxon>
    </lineage>
</organism>
<evidence type="ECO:0000255" key="1">
    <source>
        <dbReference type="HAMAP-Rule" id="MF_01495"/>
    </source>
</evidence>
<feature type="chain" id="PRO_0000359828" description="Photosystem II CP47 reaction center protein">
    <location>
        <begin position="1"/>
        <end position="508"/>
    </location>
</feature>
<feature type="transmembrane region" description="Helical" evidence="1">
    <location>
        <begin position="21"/>
        <end position="36"/>
    </location>
</feature>
<feature type="transmembrane region" description="Helical" evidence="1">
    <location>
        <begin position="101"/>
        <end position="115"/>
    </location>
</feature>
<feature type="transmembrane region" description="Helical" evidence="1">
    <location>
        <begin position="140"/>
        <end position="156"/>
    </location>
</feature>
<feature type="transmembrane region" description="Helical" evidence="1">
    <location>
        <begin position="203"/>
        <end position="218"/>
    </location>
</feature>
<feature type="transmembrane region" description="Helical" evidence="1">
    <location>
        <begin position="237"/>
        <end position="252"/>
    </location>
</feature>
<feature type="transmembrane region" description="Helical" evidence="1">
    <location>
        <begin position="457"/>
        <end position="472"/>
    </location>
</feature>
<dbReference type="EMBL" id="DQ383815">
    <property type="protein sequence ID" value="ABD47171.1"/>
    <property type="molecule type" value="Genomic_DNA"/>
</dbReference>
<dbReference type="RefSeq" id="YP_588143.1">
    <property type="nucleotide sequence ID" value="NC_007977.1"/>
</dbReference>
<dbReference type="SMR" id="Q1KXT3"/>
<dbReference type="EnsemblPlants" id="mRNA:HanXRQr2_Chr01g0017681">
    <property type="protein sequence ID" value="CDS:HanXRQr2_Chr01g0017681.1"/>
    <property type="gene ID" value="HanXRQr2_Chr01g0017681"/>
</dbReference>
<dbReference type="EnsemblPlants" id="mRNA:HanXRQr2_Chr10g0440671">
    <property type="protein sequence ID" value="CDS:HanXRQr2_Chr10g0440671.1"/>
    <property type="gene ID" value="HanXRQr2_Chr10g0440671"/>
</dbReference>
<dbReference type="GeneID" id="4055665"/>
<dbReference type="Gramene" id="mRNA:HanXRQr2_Chr01g0017681">
    <property type="protein sequence ID" value="CDS:HanXRQr2_Chr01g0017681.1"/>
    <property type="gene ID" value="HanXRQr2_Chr01g0017681"/>
</dbReference>
<dbReference type="Gramene" id="mRNA:HanXRQr2_Chr10g0440671">
    <property type="protein sequence ID" value="CDS:HanXRQr2_Chr10g0440671.1"/>
    <property type="gene ID" value="HanXRQr2_Chr10g0440671"/>
</dbReference>
<dbReference type="KEGG" id="han:4055665"/>
<dbReference type="OMA" id="MYGSATT"/>
<dbReference type="OrthoDB" id="375at2759"/>
<dbReference type="PhylomeDB" id="Q1KXT3"/>
<dbReference type="GO" id="GO:0009535">
    <property type="term" value="C:chloroplast thylakoid membrane"/>
    <property type="evidence" value="ECO:0007669"/>
    <property type="project" value="UniProtKB-SubCell"/>
</dbReference>
<dbReference type="GO" id="GO:0009523">
    <property type="term" value="C:photosystem II"/>
    <property type="evidence" value="ECO:0007669"/>
    <property type="project" value="UniProtKB-KW"/>
</dbReference>
<dbReference type="GO" id="GO:0016168">
    <property type="term" value="F:chlorophyll binding"/>
    <property type="evidence" value="ECO:0007669"/>
    <property type="project" value="UniProtKB-UniRule"/>
</dbReference>
<dbReference type="GO" id="GO:0045156">
    <property type="term" value="F:electron transporter, transferring electrons within the cyclic electron transport pathway of photosynthesis activity"/>
    <property type="evidence" value="ECO:0007669"/>
    <property type="project" value="InterPro"/>
</dbReference>
<dbReference type="GO" id="GO:0009772">
    <property type="term" value="P:photosynthetic electron transport in photosystem II"/>
    <property type="evidence" value="ECO:0007669"/>
    <property type="project" value="InterPro"/>
</dbReference>
<dbReference type="FunFam" id="3.10.680.10:FF:000001">
    <property type="entry name" value="Photosystem II CP47 reaction center protein"/>
    <property type="match status" value="1"/>
</dbReference>
<dbReference type="Gene3D" id="3.10.680.10">
    <property type="entry name" value="Photosystem II CP47 reaction center protein"/>
    <property type="match status" value="1"/>
</dbReference>
<dbReference type="HAMAP" id="MF_01495">
    <property type="entry name" value="PSII_PsbB_CP47"/>
    <property type="match status" value="1"/>
</dbReference>
<dbReference type="InterPro" id="IPR000932">
    <property type="entry name" value="PS_antenna-like"/>
</dbReference>
<dbReference type="InterPro" id="IPR036001">
    <property type="entry name" value="PS_II_antenna-like_sf"/>
</dbReference>
<dbReference type="InterPro" id="IPR017486">
    <property type="entry name" value="PSII_PsbB"/>
</dbReference>
<dbReference type="NCBIfam" id="TIGR03039">
    <property type="entry name" value="PS_II_CP47"/>
    <property type="match status" value="1"/>
</dbReference>
<dbReference type="PANTHER" id="PTHR33180">
    <property type="entry name" value="PHOTOSYSTEM II CP43 REACTION CENTER PROTEIN"/>
    <property type="match status" value="1"/>
</dbReference>
<dbReference type="PANTHER" id="PTHR33180:SF38">
    <property type="entry name" value="PHOTOSYSTEM II CP47 REACTION CENTER PROTEIN"/>
    <property type="match status" value="1"/>
</dbReference>
<dbReference type="Pfam" id="PF00421">
    <property type="entry name" value="PSII"/>
    <property type="match status" value="1"/>
</dbReference>
<dbReference type="SUPFAM" id="SSF161077">
    <property type="entry name" value="Photosystem II antenna protein-like"/>
    <property type="match status" value="1"/>
</dbReference>
<sequence length="508" mass="56175">MGLPWYRVHTVVLNDPGRLLSVHIMHTALVAGWAGSMALYELAVFDPSDPVLDPMWRQGMFVIPFMTRLGITNSWGGWSITGGTITNPGIWSYEGVAGAHIVFSGLCFLAAIWHWVYWDLEIFCDERTGKPSLDLPKIFGIHLFLAGLACFGFGAFHVTGLYGPGIWVSDPYGLTGKVQSVNPSWGVEGFDPFVPGGIASHHIAAGTLGILAGLFHLSVRPPQRLYKGLRMGNIETVLSSSIAAVFFAAFVVAGTMWYGSATTPIELFGPTRYQWDQGYFQQEIYRRVSAGLAENQSLSEVWSKIPEKLAFYDYIGNNPAKGGLFRAGSMDNGDGIAVGWLGHPIFRDKEGRELFVRRMPTFFETFPVVLVDGDGIVRADVPFRRAESKYSVEQVGVTVEFYGGELNGVSYSDPVTVKKYARRAQLGEIFELDRATLKSDGVFRSSPRGWFTFGHASFALLFFFGHIWHGSRTLFRDVFAGIDPDLDAQVEFGAFQKLGDPTTRRQAI</sequence>
<protein>
    <recommendedName>
        <fullName evidence="1">Photosystem II CP47 reaction center protein</fullName>
    </recommendedName>
    <alternativeName>
        <fullName evidence="1">PSII 47 kDa protein</fullName>
    </alternativeName>
    <alternativeName>
        <fullName evidence="1">Protein CP-47</fullName>
    </alternativeName>
</protein>
<keyword id="KW-0148">Chlorophyll</keyword>
<keyword id="KW-0150">Chloroplast</keyword>
<keyword id="KW-0157">Chromophore</keyword>
<keyword id="KW-0472">Membrane</keyword>
<keyword id="KW-0602">Photosynthesis</keyword>
<keyword id="KW-0604">Photosystem II</keyword>
<keyword id="KW-0934">Plastid</keyword>
<keyword id="KW-0793">Thylakoid</keyword>
<keyword id="KW-0812">Transmembrane</keyword>
<keyword id="KW-1133">Transmembrane helix</keyword>
<proteinExistence type="inferred from homology"/>